<sequence>MDLKVVAVSFLLLVLCSEAAGYQLLTWEQANTAVKGVLDKVHSTGVEKLRDIYDKSVDAVGTYTSILTDQLYHWWCGEQ</sequence>
<proteinExistence type="inferred from homology"/>
<accession>P0DMT9</accession>
<dbReference type="EMBL" id="AKHW01099694">
    <property type="status" value="NOT_ANNOTATED_CDS"/>
    <property type="molecule type" value="Genomic_DNA"/>
</dbReference>
<dbReference type="SMR" id="P0DMT9"/>
<dbReference type="eggNOG" id="ENOG502SEJB">
    <property type="taxonomic scope" value="Eukaryota"/>
</dbReference>
<dbReference type="GO" id="GO:0042627">
    <property type="term" value="C:chylomicron"/>
    <property type="evidence" value="ECO:0007669"/>
    <property type="project" value="UniProtKB-KW"/>
</dbReference>
<dbReference type="GO" id="GO:0034364">
    <property type="term" value="C:high-density lipoprotein particle"/>
    <property type="evidence" value="ECO:0007669"/>
    <property type="project" value="UniProtKB-KW"/>
</dbReference>
<dbReference type="GO" id="GO:0034362">
    <property type="term" value="C:low-density lipoprotein particle"/>
    <property type="evidence" value="ECO:0007669"/>
    <property type="project" value="UniProtKB-KW"/>
</dbReference>
<dbReference type="GO" id="GO:0034361">
    <property type="term" value="C:very-low-density lipoprotein particle"/>
    <property type="evidence" value="ECO:0007669"/>
    <property type="project" value="UniProtKB-KW"/>
</dbReference>
<dbReference type="GO" id="GO:0016004">
    <property type="term" value="F:phospholipase activator activity"/>
    <property type="evidence" value="ECO:0007669"/>
    <property type="project" value="TreeGrafter"/>
</dbReference>
<dbReference type="GO" id="GO:0043274">
    <property type="term" value="F:phospholipase binding"/>
    <property type="evidence" value="ECO:0007669"/>
    <property type="project" value="TreeGrafter"/>
</dbReference>
<dbReference type="GO" id="GO:0016042">
    <property type="term" value="P:lipid catabolic process"/>
    <property type="evidence" value="ECO:0007669"/>
    <property type="project" value="UniProtKB-KW"/>
</dbReference>
<dbReference type="GO" id="GO:0006869">
    <property type="term" value="P:lipid transport"/>
    <property type="evidence" value="ECO:0007669"/>
    <property type="project" value="UniProtKB-KW"/>
</dbReference>
<dbReference type="GO" id="GO:0060697">
    <property type="term" value="P:positive regulation of phospholipid catabolic process"/>
    <property type="evidence" value="ECO:0007669"/>
    <property type="project" value="TreeGrafter"/>
</dbReference>
<dbReference type="Gene3D" id="1.10.1440.10">
    <property type="entry name" value="Apolipoprotein C-II"/>
    <property type="match status" value="1"/>
</dbReference>
<dbReference type="InterPro" id="IPR008019">
    <property type="entry name" value="Apo-CII"/>
</dbReference>
<dbReference type="InterPro" id="IPR023121">
    <property type="entry name" value="ApoC-II_dom_sf"/>
</dbReference>
<dbReference type="PANTHER" id="PTHR16566">
    <property type="entry name" value="APOLIPOPROTEIN C-II"/>
    <property type="match status" value="1"/>
</dbReference>
<dbReference type="PANTHER" id="PTHR16566:SF0">
    <property type="entry name" value="APOLIPOPROTEIN C-II"/>
    <property type="match status" value="1"/>
</dbReference>
<dbReference type="Pfam" id="PF05355">
    <property type="entry name" value="Apo-CII"/>
    <property type="match status" value="1"/>
</dbReference>
<comment type="function">
    <text evidence="1">Component of chylomicrons, very low-density lipoproteins (VLDL), low-density lipoproteins (LDL), and high-density lipoproteins (HDL) in plasma. Plays an important role in lipoprotein metabolism as an activator of lipoprotein lipase. Both proapolipoprotein C-II and apolipoprotein C-II can activate lipoprotein lipase.</text>
</comment>
<comment type="subcellular location">
    <subcellularLocation>
        <location evidence="1">Secreted</location>
    </subcellularLocation>
</comment>
<comment type="PTM">
    <text evidence="1">Proapolipoprotein C-II is synthesized as a sialic acid containing glycoprotein which is subsequently desialylated prior to its proteolytic processing.</text>
</comment>
<comment type="PTM">
    <text evidence="1">Proapolipoprotein C-II, the major form found in plasma undergoes proteolytic cleavage of its N-terminal hexapeptide to generate apolipoprotein C-II, which occurs as the minor form in plasma.</text>
</comment>
<comment type="similarity">
    <text evidence="3">Belongs to the apolipoprotein C2 family.</text>
</comment>
<name>APOC2_ALLMI</name>
<feature type="signal peptide" evidence="2">
    <location>
        <begin position="1"/>
        <end position="21"/>
    </location>
</feature>
<feature type="chain" id="PRO_0000432753" description="Proapolipoprotein C-II">
    <location>
        <begin position="22"/>
        <end position="79"/>
    </location>
</feature>
<feature type="chain" id="PRO_0000432754" description="Apolipoprotein C-II">
    <location>
        <begin status="unknown"/>
        <end position="79"/>
    </location>
</feature>
<feature type="region of interest" description="Lipid binding" evidence="1">
    <location>
        <begin position="45"/>
        <end position="52"/>
    </location>
</feature>
<feature type="region of interest" description="Lipoprotein lipase cofactor" evidence="1">
    <location>
        <begin position="56"/>
        <end position="79"/>
    </location>
</feature>
<protein>
    <recommendedName>
        <fullName>Apolipoprotein C-II</fullName>
        <shortName>Apo-CII</shortName>
        <shortName>ApoC-II</shortName>
    </recommendedName>
    <alternativeName>
        <fullName>Apolipoprotein C2</fullName>
    </alternativeName>
    <component>
        <recommendedName>
            <fullName>Proapolipoprotein C-II</fullName>
            <shortName>ProapoC-II</shortName>
        </recommendedName>
    </component>
</protein>
<keyword id="KW-0162">Chylomicron</keyword>
<keyword id="KW-0325">Glycoprotein</keyword>
<keyword id="KW-0345">HDL</keyword>
<keyword id="KW-0427">LDL</keyword>
<keyword id="KW-0442">Lipid degradation</keyword>
<keyword id="KW-0443">Lipid metabolism</keyword>
<keyword id="KW-0445">Lipid transport</keyword>
<keyword id="KW-0964">Secreted</keyword>
<keyword id="KW-0730">Sialic acid</keyword>
<keyword id="KW-0732">Signal</keyword>
<keyword id="KW-0813">Transport</keyword>
<keyword id="KW-0850">VLDL</keyword>
<organism>
    <name type="scientific">Alligator mississippiensis</name>
    <name type="common">American alligator</name>
    <dbReference type="NCBI Taxonomy" id="8496"/>
    <lineage>
        <taxon>Eukaryota</taxon>
        <taxon>Metazoa</taxon>
        <taxon>Chordata</taxon>
        <taxon>Craniata</taxon>
        <taxon>Vertebrata</taxon>
        <taxon>Euteleostomi</taxon>
        <taxon>Archelosauria</taxon>
        <taxon>Archosauria</taxon>
        <taxon>Crocodylia</taxon>
        <taxon>Alligatoridae</taxon>
        <taxon>Alligatorinae</taxon>
        <taxon>Alligator</taxon>
    </lineage>
</organism>
<gene>
    <name type="primary">APOC2</name>
</gene>
<evidence type="ECO:0000250" key="1">
    <source>
        <dbReference type="UniProtKB" id="P02655"/>
    </source>
</evidence>
<evidence type="ECO:0000255" key="2"/>
<evidence type="ECO:0000305" key="3"/>
<reference key="1">
    <citation type="submission" date="2012-07" db="EMBL/GenBank/DDBJ databases">
        <authorList>
            <person name="St John J.A."/>
            <person name="Green R.E."/>
            <person name="Braun E.L."/>
            <person name="Ray D.A."/>
        </authorList>
    </citation>
    <scope>NUCLEOTIDE SEQUENCE [LARGE SCALE GENOMIC DNA]</scope>
</reference>
<reference key="2">
    <citation type="unpublished observations" date="2015-02">
        <authorList>
            <person name="Puppione D.L."/>
        </authorList>
    </citation>
    <scope>IDENTIFICATION</scope>
</reference>